<name>GATC_RHOPB</name>
<proteinExistence type="inferred from homology"/>
<feature type="chain" id="PRO_1000016194" description="Aspartyl/glutamyl-tRNA(Asn/Gln) amidotransferase subunit C">
    <location>
        <begin position="1"/>
        <end position="95"/>
    </location>
</feature>
<gene>
    <name evidence="1" type="primary">gatC</name>
    <name type="ordered locus">RPC_2260</name>
</gene>
<reference key="1">
    <citation type="submission" date="2006-03" db="EMBL/GenBank/DDBJ databases">
        <title>Complete sequence of Rhodopseudomonas palustris BisB18.</title>
        <authorList>
            <consortium name="US DOE Joint Genome Institute"/>
            <person name="Copeland A."/>
            <person name="Lucas S."/>
            <person name="Lapidus A."/>
            <person name="Barry K."/>
            <person name="Detter J.C."/>
            <person name="Glavina del Rio T."/>
            <person name="Hammon N."/>
            <person name="Israni S."/>
            <person name="Dalin E."/>
            <person name="Tice H."/>
            <person name="Pitluck S."/>
            <person name="Chain P."/>
            <person name="Malfatti S."/>
            <person name="Shin M."/>
            <person name="Vergez L."/>
            <person name="Schmutz J."/>
            <person name="Larimer F."/>
            <person name="Land M."/>
            <person name="Hauser L."/>
            <person name="Pelletier D.A."/>
            <person name="Kyrpides N."/>
            <person name="Anderson I."/>
            <person name="Oda Y."/>
            <person name="Harwood C.S."/>
            <person name="Richardson P."/>
        </authorList>
    </citation>
    <scope>NUCLEOTIDE SEQUENCE [LARGE SCALE GENOMIC DNA]</scope>
    <source>
        <strain>BisB18</strain>
    </source>
</reference>
<dbReference type="EC" id="6.3.5.-" evidence="1"/>
<dbReference type="EMBL" id="CP000301">
    <property type="protein sequence ID" value="ABD87814.1"/>
    <property type="molecule type" value="Genomic_DNA"/>
</dbReference>
<dbReference type="SMR" id="Q215X2"/>
<dbReference type="STRING" id="316056.RPC_2260"/>
<dbReference type="KEGG" id="rpc:RPC_2260"/>
<dbReference type="eggNOG" id="COG0721">
    <property type="taxonomic scope" value="Bacteria"/>
</dbReference>
<dbReference type="HOGENOM" id="CLU_105899_2_0_5"/>
<dbReference type="OrthoDB" id="9794326at2"/>
<dbReference type="GO" id="GO:0050566">
    <property type="term" value="F:asparaginyl-tRNA synthase (glutamine-hydrolyzing) activity"/>
    <property type="evidence" value="ECO:0007669"/>
    <property type="project" value="RHEA"/>
</dbReference>
<dbReference type="GO" id="GO:0005524">
    <property type="term" value="F:ATP binding"/>
    <property type="evidence" value="ECO:0007669"/>
    <property type="project" value="UniProtKB-KW"/>
</dbReference>
<dbReference type="GO" id="GO:0050567">
    <property type="term" value="F:glutaminyl-tRNA synthase (glutamine-hydrolyzing) activity"/>
    <property type="evidence" value="ECO:0007669"/>
    <property type="project" value="UniProtKB-UniRule"/>
</dbReference>
<dbReference type="GO" id="GO:0070681">
    <property type="term" value="P:glutaminyl-tRNAGln biosynthesis via transamidation"/>
    <property type="evidence" value="ECO:0007669"/>
    <property type="project" value="TreeGrafter"/>
</dbReference>
<dbReference type="GO" id="GO:0006450">
    <property type="term" value="P:regulation of translational fidelity"/>
    <property type="evidence" value="ECO:0007669"/>
    <property type="project" value="InterPro"/>
</dbReference>
<dbReference type="GO" id="GO:0006412">
    <property type="term" value="P:translation"/>
    <property type="evidence" value="ECO:0007669"/>
    <property type="project" value="UniProtKB-UniRule"/>
</dbReference>
<dbReference type="Gene3D" id="1.10.20.60">
    <property type="entry name" value="Glu-tRNAGln amidotransferase C subunit, N-terminal domain"/>
    <property type="match status" value="1"/>
</dbReference>
<dbReference type="HAMAP" id="MF_00122">
    <property type="entry name" value="GatC"/>
    <property type="match status" value="1"/>
</dbReference>
<dbReference type="InterPro" id="IPR036113">
    <property type="entry name" value="Asp/Glu-ADT_sf_sub_c"/>
</dbReference>
<dbReference type="InterPro" id="IPR003837">
    <property type="entry name" value="GatC"/>
</dbReference>
<dbReference type="NCBIfam" id="TIGR00135">
    <property type="entry name" value="gatC"/>
    <property type="match status" value="1"/>
</dbReference>
<dbReference type="PANTHER" id="PTHR15004">
    <property type="entry name" value="GLUTAMYL-TRNA(GLN) AMIDOTRANSFERASE SUBUNIT C, MITOCHONDRIAL"/>
    <property type="match status" value="1"/>
</dbReference>
<dbReference type="PANTHER" id="PTHR15004:SF0">
    <property type="entry name" value="GLUTAMYL-TRNA(GLN) AMIDOTRANSFERASE SUBUNIT C, MITOCHONDRIAL"/>
    <property type="match status" value="1"/>
</dbReference>
<dbReference type="Pfam" id="PF02686">
    <property type="entry name" value="GatC"/>
    <property type="match status" value="1"/>
</dbReference>
<dbReference type="SUPFAM" id="SSF141000">
    <property type="entry name" value="Glu-tRNAGln amidotransferase C subunit"/>
    <property type="match status" value="1"/>
</dbReference>
<organism>
    <name type="scientific">Rhodopseudomonas palustris (strain BisB18)</name>
    <dbReference type="NCBI Taxonomy" id="316056"/>
    <lineage>
        <taxon>Bacteria</taxon>
        <taxon>Pseudomonadati</taxon>
        <taxon>Pseudomonadota</taxon>
        <taxon>Alphaproteobacteria</taxon>
        <taxon>Hyphomicrobiales</taxon>
        <taxon>Nitrobacteraceae</taxon>
        <taxon>Rhodopseudomonas</taxon>
    </lineage>
</organism>
<accession>Q215X2</accession>
<sequence length="95" mass="10297">MSVDATTVRRIAHLARIAVTDAEVPHLQGELNAMLAFVEQLGEVDVDGVEPMTSVTPMQMKKRVDAVNDGEIADQVVANAPATEDHFFLVPKVVE</sequence>
<evidence type="ECO:0000255" key="1">
    <source>
        <dbReference type="HAMAP-Rule" id="MF_00122"/>
    </source>
</evidence>
<keyword id="KW-0067">ATP-binding</keyword>
<keyword id="KW-0436">Ligase</keyword>
<keyword id="KW-0547">Nucleotide-binding</keyword>
<keyword id="KW-0648">Protein biosynthesis</keyword>
<comment type="function">
    <text evidence="1">Allows the formation of correctly charged Asn-tRNA(Asn) or Gln-tRNA(Gln) through the transamidation of misacylated Asp-tRNA(Asn) or Glu-tRNA(Gln) in organisms which lack either or both of asparaginyl-tRNA or glutaminyl-tRNA synthetases. The reaction takes place in the presence of glutamine and ATP through an activated phospho-Asp-tRNA(Asn) or phospho-Glu-tRNA(Gln).</text>
</comment>
<comment type="catalytic activity">
    <reaction evidence="1">
        <text>L-glutamyl-tRNA(Gln) + L-glutamine + ATP + H2O = L-glutaminyl-tRNA(Gln) + L-glutamate + ADP + phosphate + H(+)</text>
        <dbReference type="Rhea" id="RHEA:17521"/>
        <dbReference type="Rhea" id="RHEA-COMP:9681"/>
        <dbReference type="Rhea" id="RHEA-COMP:9684"/>
        <dbReference type="ChEBI" id="CHEBI:15377"/>
        <dbReference type="ChEBI" id="CHEBI:15378"/>
        <dbReference type="ChEBI" id="CHEBI:29985"/>
        <dbReference type="ChEBI" id="CHEBI:30616"/>
        <dbReference type="ChEBI" id="CHEBI:43474"/>
        <dbReference type="ChEBI" id="CHEBI:58359"/>
        <dbReference type="ChEBI" id="CHEBI:78520"/>
        <dbReference type="ChEBI" id="CHEBI:78521"/>
        <dbReference type="ChEBI" id="CHEBI:456216"/>
    </reaction>
</comment>
<comment type="catalytic activity">
    <reaction evidence="1">
        <text>L-aspartyl-tRNA(Asn) + L-glutamine + ATP + H2O = L-asparaginyl-tRNA(Asn) + L-glutamate + ADP + phosphate + 2 H(+)</text>
        <dbReference type="Rhea" id="RHEA:14513"/>
        <dbReference type="Rhea" id="RHEA-COMP:9674"/>
        <dbReference type="Rhea" id="RHEA-COMP:9677"/>
        <dbReference type="ChEBI" id="CHEBI:15377"/>
        <dbReference type="ChEBI" id="CHEBI:15378"/>
        <dbReference type="ChEBI" id="CHEBI:29985"/>
        <dbReference type="ChEBI" id="CHEBI:30616"/>
        <dbReference type="ChEBI" id="CHEBI:43474"/>
        <dbReference type="ChEBI" id="CHEBI:58359"/>
        <dbReference type="ChEBI" id="CHEBI:78515"/>
        <dbReference type="ChEBI" id="CHEBI:78516"/>
        <dbReference type="ChEBI" id="CHEBI:456216"/>
    </reaction>
</comment>
<comment type="subunit">
    <text evidence="1">Heterotrimer of A, B and C subunits.</text>
</comment>
<comment type="similarity">
    <text evidence="1">Belongs to the GatC family.</text>
</comment>
<protein>
    <recommendedName>
        <fullName evidence="1">Aspartyl/glutamyl-tRNA(Asn/Gln) amidotransferase subunit C</fullName>
        <shortName evidence="1">Asp/Glu-ADT subunit C</shortName>
        <ecNumber evidence="1">6.3.5.-</ecNumber>
    </recommendedName>
</protein>